<feature type="chain" id="PRO_1000165944" description="Large ribosomal subunit protein uL24">
    <location>
        <begin position="1"/>
        <end position="104"/>
    </location>
</feature>
<sequence>MAAKIRRDDEVIVLTGKDKGKRGKVKNVLSSGKVIVEGINLVKKHQKPVPALNQPGGIVEKEAAIQVSNVAIFNAATGKADRVGFRFEDGKKVRFFKSNSETIK</sequence>
<dbReference type="EMBL" id="CU928145">
    <property type="protein sequence ID" value="CAV00019.1"/>
    <property type="molecule type" value="Genomic_DNA"/>
</dbReference>
<dbReference type="RefSeq" id="WP_000729185.1">
    <property type="nucleotide sequence ID" value="NC_011748.1"/>
</dbReference>
<dbReference type="EMDB" id="EMD-8826"/>
<dbReference type="EMDB" id="EMD-8829"/>
<dbReference type="SMR" id="B7L4J5"/>
<dbReference type="GeneID" id="93778678"/>
<dbReference type="KEGG" id="eck:EC55989_3725"/>
<dbReference type="HOGENOM" id="CLU_093315_2_2_6"/>
<dbReference type="Proteomes" id="UP000000746">
    <property type="component" value="Chromosome"/>
</dbReference>
<dbReference type="GO" id="GO:0005829">
    <property type="term" value="C:cytosol"/>
    <property type="evidence" value="ECO:0007669"/>
    <property type="project" value="UniProtKB-ARBA"/>
</dbReference>
<dbReference type="GO" id="GO:1990904">
    <property type="term" value="C:ribonucleoprotein complex"/>
    <property type="evidence" value="ECO:0007669"/>
    <property type="project" value="UniProtKB-KW"/>
</dbReference>
<dbReference type="GO" id="GO:0005840">
    <property type="term" value="C:ribosome"/>
    <property type="evidence" value="ECO:0007669"/>
    <property type="project" value="UniProtKB-KW"/>
</dbReference>
<dbReference type="GO" id="GO:0019843">
    <property type="term" value="F:rRNA binding"/>
    <property type="evidence" value="ECO:0007669"/>
    <property type="project" value="UniProtKB-UniRule"/>
</dbReference>
<dbReference type="GO" id="GO:0003735">
    <property type="term" value="F:structural constituent of ribosome"/>
    <property type="evidence" value="ECO:0007669"/>
    <property type="project" value="InterPro"/>
</dbReference>
<dbReference type="GO" id="GO:0006412">
    <property type="term" value="P:translation"/>
    <property type="evidence" value="ECO:0007669"/>
    <property type="project" value="UniProtKB-UniRule"/>
</dbReference>
<dbReference type="CDD" id="cd06089">
    <property type="entry name" value="KOW_RPL26"/>
    <property type="match status" value="1"/>
</dbReference>
<dbReference type="FunFam" id="2.30.30.30:FF:000004">
    <property type="entry name" value="50S ribosomal protein L24"/>
    <property type="match status" value="1"/>
</dbReference>
<dbReference type="Gene3D" id="2.30.30.30">
    <property type="match status" value="1"/>
</dbReference>
<dbReference type="HAMAP" id="MF_01326_B">
    <property type="entry name" value="Ribosomal_uL24_B"/>
    <property type="match status" value="1"/>
</dbReference>
<dbReference type="InterPro" id="IPR005824">
    <property type="entry name" value="KOW"/>
</dbReference>
<dbReference type="InterPro" id="IPR014722">
    <property type="entry name" value="Rib_uL2_dom2"/>
</dbReference>
<dbReference type="InterPro" id="IPR003256">
    <property type="entry name" value="Ribosomal_uL24"/>
</dbReference>
<dbReference type="InterPro" id="IPR005825">
    <property type="entry name" value="Ribosomal_uL24_CS"/>
</dbReference>
<dbReference type="InterPro" id="IPR041988">
    <property type="entry name" value="Ribosomal_uL24_KOW"/>
</dbReference>
<dbReference type="InterPro" id="IPR008991">
    <property type="entry name" value="Translation_prot_SH3-like_sf"/>
</dbReference>
<dbReference type="NCBIfam" id="TIGR01079">
    <property type="entry name" value="rplX_bact"/>
    <property type="match status" value="1"/>
</dbReference>
<dbReference type="PANTHER" id="PTHR12903">
    <property type="entry name" value="MITOCHONDRIAL RIBOSOMAL PROTEIN L24"/>
    <property type="match status" value="1"/>
</dbReference>
<dbReference type="Pfam" id="PF00467">
    <property type="entry name" value="KOW"/>
    <property type="match status" value="1"/>
</dbReference>
<dbReference type="Pfam" id="PF17136">
    <property type="entry name" value="ribosomal_L24"/>
    <property type="match status" value="1"/>
</dbReference>
<dbReference type="SMART" id="SM00739">
    <property type="entry name" value="KOW"/>
    <property type="match status" value="1"/>
</dbReference>
<dbReference type="SUPFAM" id="SSF50104">
    <property type="entry name" value="Translation proteins SH3-like domain"/>
    <property type="match status" value="1"/>
</dbReference>
<dbReference type="PROSITE" id="PS01108">
    <property type="entry name" value="RIBOSOMAL_L24"/>
    <property type="match status" value="1"/>
</dbReference>
<gene>
    <name evidence="1" type="primary">rplX</name>
    <name type="ordered locus">EC55989_3725</name>
</gene>
<comment type="function">
    <text evidence="1">One of two assembly initiator proteins, it binds directly to the 5'-end of the 23S rRNA, where it nucleates assembly of the 50S subunit.</text>
</comment>
<comment type="function">
    <text evidence="1">One of the proteins that surrounds the polypeptide exit tunnel on the outside of the subunit.</text>
</comment>
<comment type="subunit">
    <text evidence="1">Part of the 50S ribosomal subunit.</text>
</comment>
<comment type="similarity">
    <text evidence="1">Belongs to the universal ribosomal protein uL24 family.</text>
</comment>
<organism>
    <name type="scientific">Escherichia coli (strain 55989 / EAEC)</name>
    <dbReference type="NCBI Taxonomy" id="585055"/>
    <lineage>
        <taxon>Bacteria</taxon>
        <taxon>Pseudomonadati</taxon>
        <taxon>Pseudomonadota</taxon>
        <taxon>Gammaproteobacteria</taxon>
        <taxon>Enterobacterales</taxon>
        <taxon>Enterobacteriaceae</taxon>
        <taxon>Escherichia</taxon>
    </lineage>
</organism>
<name>RL24_ECO55</name>
<accession>B7L4J5</accession>
<keyword id="KW-1185">Reference proteome</keyword>
<keyword id="KW-0687">Ribonucleoprotein</keyword>
<keyword id="KW-0689">Ribosomal protein</keyword>
<keyword id="KW-0694">RNA-binding</keyword>
<keyword id="KW-0699">rRNA-binding</keyword>
<evidence type="ECO:0000255" key="1">
    <source>
        <dbReference type="HAMAP-Rule" id="MF_01326"/>
    </source>
</evidence>
<evidence type="ECO:0000305" key="2"/>
<protein>
    <recommendedName>
        <fullName evidence="1">Large ribosomal subunit protein uL24</fullName>
    </recommendedName>
    <alternativeName>
        <fullName evidence="2">50S ribosomal protein L24</fullName>
    </alternativeName>
</protein>
<proteinExistence type="inferred from homology"/>
<reference key="1">
    <citation type="journal article" date="2009" name="PLoS Genet.">
        <title>Organised genome dynamics in the Escherichia coli species results in highly diverse adaptive paths.</title>
        <authorList>
            <person name="Touchon M."/>
            <person name="Hoede C."/>
            <person name="Tenaillon O."/>
            <person name="Barbe V."/>
            <person name="Baeriswyl S."/>
            <person name="Bidet P."/>
            <person name="Bingen E."/>
            <person name="Bonacorsi S."/>
            <person name="Bouchier C."/>
            <person name="Bouvet O."/>
            <person name="Calteau A."/>
            <person name="Chiapello H."/>
            <person name="Clermont O."/>
            <person name="Cruveiller S."/>
            <person name="Danchin A."/>
            <person name="Diard M."/>
            <person name="Dossat C."/>
            <person name="Karoui M.E."/>
            <person name="Frapy E."/>
            <person name="Garry L."/>
            <person name="Ghigo J.M."/>
            <person name="Gilles A.M."/>
            <person name="Johnson J."/>
            <person name="Le Bouguenec C."/>
            <person name="Lescat M."/>
            <person name="Mangenot S."/>
            <person name="Martinez-Jehanne V."/>
            <person name="Matic I."/>
            <person name="Nassif X."/>
            <person name="Oztas S."/>
            <person name="Petit M.A."/>
            <person name="Pichon C."/>
            <person name="Rouy Z."/>
            <person name="Ruf C.S."/>
            <person name="Schneider D."/>
            <person name="Tourret J."/>
            <person name="Vacherie B."/>
            <person name="Vallenet D."/>
            <person name="Medigue C."/>
            <person name="Rocha E.P.C."/>
            <person name="Denamur E."/>
        </authorList>
    </citation>
    <scope>NUCLEOTIDE SEQUENCE [LARGE SCALE GENOMIC DNA]</scope>
    <source>
        <strain>55989 / EAEC</strain>
    </source>
</reference>